<accession>P9WIC2</accession>
<accession>L0TFE5</accession>
<accession>P96240</accession>
<accession>Q7D4S0</accession>
<evidence type="ECO:0000250" key="1"/>
<evidence type="ECO:0000255" key="2">
    <source>
        <dbReference type="PROSITE-ProRule" id="PRU00517"/>
    </source>
</evidence>
<evidence type="ECO:0000255" key="3">
    <source>
        <dbReference type="PROSITE-ProRule" id="PRU01007"/>
    </source>
</evidence>
<feature type="chain" id="PRO_0000428032" description="Prephenate dehydratase">
    <location>
        <begin position="1"/>
        <end position="321"/>
    </location>
</feature>
<feature type="domain" description="Prephenate dehydratase" evidence="2">
    <location>
        <begin position="3"/>
        <end position="189"/>
    </location>
</feature>
<feature type="domain" description="ACT" evidence="3">
    <location>
        <begin position="203"/>
        <end position="280"/>
    </location>
</feature>
<feature type="site" description="Essential for activity" evidence="1">
    <location>
        <position position="182"/>
    </location>
</feature>
<name>PHEA_MYCTO</name>
<gene>
    <name type="primary">pheA</name>
    <name type="ordered locus">MT3946</name>
</gene>
<sequence length="321" mass="33633">MVRIAYLGPEGTFTEAALVRMVAAGLVPETGPDALQRMPVESAPAALAAVRDGGADYACVPIENSIDGSVLPTLDSLAIGVRLQVFAETTLDVTFSIVVKPGRNAADVRTLAAFPVAAAQVRQWLAAHLPAADLRPAYSNADAARQVADGLVDAAVTSPLAAARWGLAALADGVVDESNARTRFVLVGRPGPPPARTGADRTSAVLRIDNQPGALVAALAEFGIRGIDLTRIESRPTRTELGTYLFFVDCVGHIDDEAVAEALKAVHRRCADVRYLGSWPTGPAAGAQPPLVDEASRWLARLRAGKPEQTLVRPDDQGAQA</sequence>
<reference key="1">
    <citation type="journal article" date="2002" name="J. Bacteriol.">
        <title>Whole-genome comparison of Mycobacterium tuberculosis clinical and laboratory strains.</title>
        <authorList>
            <person name="Fleischmann R.D."/>
            <person name="Alland D."/>
            <person name="Eisen J.A."/>
            <person name="Carpenter L."/>
            <person name="White O."/>
            <person name="Peterson J.D."/>
            <person name="DeBoy R.T."/>
            <person name="Dodson R.J."/>
            <person name="Gwinn M.L."/>
            <person name="Haft D.H."/>
            <person name="Hickey E.K."/>
            <person name="Kolonay J.F."/>
            <person name="Nelson W.C."/>
            <person name="Umayam L.A."/>
            <person name="Ermolaeva M.D."/>
            <person name="Salzberg S.L."/>
            <person name="Delcher A."/>
            <person name="Utterback T.R."/>
            <person name="Weidman J.F."/>
            <person name="Khouri H.M."/>
            <person name="Gill J."/>
            <person name="Mikula A."/>
            <person name="Bishai W."/>
            <person name="Jacobs W.R. Jr."/>
            <person name="Venter J.C."/>
            <person name="Fraser C.M."/>
        </authorList>
    </citation>
    <scope>NUCLEOTIDE SEQUENCE [LARGE SCALE GENOMIC DNA]</scope>
    <source>
        <strain>CDC 1551 / Oshkosh</strain>
    </source>
</reference>
<protein>
    <recommendedName>
        <fullName>Prephenate dehydratase</fullName>
        <shortName>PDT</shortName>
        <ecNumber>4.2.1.51</ecNumber>
    </recommendedName>
</protein>
<comment type="catalytic activity">
    <reaction>
        <text>prephenate + H(+) = 3-phenylpyruvate + CO2 + H2O</text>
        <dbReference type="Rhea" id="RHEA:21648"/>
        <dbReference type="ChEBI" id="CHEBI:15377"/>
        <dbReference type="ChEBI" id="CHEBI:15378"/>
        <dbReference type="ChEBI" id="CHEBI:16526"/>
        <dbReference type="ChEBI" id="CHEBI:18005"/>
        <dbReference type="ChEBI" id="CHEBI:29934"/>
        <dbReference type="EC" id="4.2.1.51"/>
    </reaction>
</comment>
<comment type="pathway">
    <text>Amino-acid biosynthesis; L-phenylalanine biosynthesis; phenylpyruvate from prephenate: step 1/1.</text>
</comment>
<comment type="subunit">
    <text evidence="1">Homodimer.</text>
</comment>
<proteinExistence type="inferred from homology"/>
<organism>
    <name type="scientific">Mycobacterium tuberculosis (strain CDC 1551 / Oshkosh)</name>
    <dbReference type="NCBI Taxonomy" id="83331"/>
    <lineage>
        <taxon>Bacteria</taxon>
        <taxon>Bacillati</taxon>
        <taxon>Actinomycetota</taxon>
        <taxon>Actinomycetes</taxon>
        <taxon>Mycobacteriales</taxon>
        <taxon>Mycobacteriaceae</taxon>
        <taxon>Mycobacterium</taxon>
        <taxon>Mycobacterium tuberculosis complex</taxon>
    </lineage>
</organism>
<dbReference type="EC" id="4.2.1.51"/>
<dbReference type="EMBL" id="AE000516">
    <property type="protein sequence ID" value="AAK48313.1"/>
    <property type="molecule type" value="Genomic_DNA"/>
</dbReference>
<dbReference type="PIR" id="C70653">
    <property type="entry name" value="C70653"/>
</dbReference>
<dbReference type="RefSeq" id="WP_003420906.1">
    <property type="nucleotide sequence ID" value="NZ_KK341227.1"/>
</dbReference>
<dbReference type="SMR" id="P9WIC2"/>
<dbReference type="KEGG" id="mtc:MT3946"/>
<dbReference type="PATRIC" id="fig|83331.31.peg.4244"/>
<dbReference type="HOGENOM" id="CLU_035008_0_0_11"/>
<dbReference type="UniPathway" id="UPA00121">
    <property type="reaction ID" value="UER00345"/>
</dbReference>
<dbReference type="Proteomes" id="UP000001020">
    <property type="component" value="Chromosome"/>
</dbReference>
<dbReference type="GO" id="GO:0005737">
    <property type="term" value="C:cytoplasm"/>
    <property type="evidence" value="ECO:0007669"/>
    <property type="project" value="TreeGrafter"/>
</dbReference>
<dbReference type="GO" id="GO:0004664">
    <property type="term" value="F:prephenate dehydratase activity"/>
    <property type="evidence" value="ECO:0007669"/>
    <property type="project" value="UniProtKB-EC"/>
</dbReference>
<dbReference type="GO" id="GO:0009094">
    <property type="term" value="P:L-phenylalanine biosynthetic process"/>
    <property type="evidence" value="ECO:0007669"/>
    <property type="project" value="UniProtKB-UniPathway"/>
</dbReference>
<dbReference type="CDD" id="cd04905">
    <property type="entry name" value="ACT_CM-PDT"/>
    <property type="match status" value="1"/>
</dbReference>
<dbReference type="CDD" id="cd13632">
    <property type="entry name" value="PBP2_Aa-PDT_like"/>
    <property type="match status" value="1"/>
</dbReference>
<dbReference type="FunFam" id="3.30.70.260:FF:000012">
    <property type="entry name" value="Prephenate dehydratase"/>
    <property type="match status" value="1"/>
</dbReference>
<dbReference type="FunFam" id="3.40.190.10:FF:000064">
    <property type="entry name" value="Prephenate dehydratase"/>
    <property type="match status" value="1"/>
</dbReference>
<dbReference type="FunFam" id="3.40.190.10:FF:000146">
    <property type="entry name" value="Prephenate dehydratase"/>
    <property type="match status" value="1"/>
</dbReference>
<dbReference type="Gene3D" id="3.30.70.260">
    <property type="match status" value="1"/>
</dbReference>
<dbReference type="Gene3D" id="3.40.190.10">
    <property type="entry name" value="Periplasmic binding protein-like II"/>
    <property type="match status" value="2"/>
</dbReference>
<dbReference type="InterPro" id="IPR045865">
    <property type="entry name" value="ACT-like_dom_sf"/>
</dbReference>
<dbReference type="InterPro" id="IPR002912">
    <property type="entry name" value="ACT_dom"/>
</dbReference>
<dbReference type="InterPro" id="IPR008242">
    <property type="entry name" value="Chor_mutase/pphenate_deHydtase"/>
</dbReference>
<dbReference type="InterPro" id="IPR001086">
    <property type="entry name" value="Preph_deHydtase"/>
</dbReference>
<dbReference type="InterPro" id="IPR018528">
    <property type="entry name" value="Preph_deHydtase_CS"/>
</dbReference>
<dbReference type="NCBIfam" id="NF008865">
    <property type="entry name" value="PRK11898.1"/>
    <property type="match status" value="1"/>
</dbReference>
<dbReference type="PANTHER" id="PTHR21022">
    <property type="entry name" value="PREPHENATE DEHYDRATASE P PROTEIN"/>
    <property type="match status" value="1"/>
</dbReference>
<dbReference type="PANTHER" id="PTHR21022:SF19">
    <property type="entry name" value="PREPHENATE DEHYDRATASE-RELATED"/>
    <property type="match status" value="1"/>
</dbReference>
<dbReference type="Pfam" id="PF01842">
    <property type="entry name" value="ACT"/>
    <property type="match status" value="1"/>
</dbReference>
<dbReference type="Pfam" id="PF00800">
    <property type="entry name" value="PDT"/>
    <property type="match status" value="1"/>
</dbReference>
<dbReference type="PIRSF" id="PIRSF001500">
    <property type="entry name" value="Chor_mut_pdt_Ppr"/>
    <property type="match status" value="1"/>
</dbReference>
<dbReference type="SUPFAM" id="SSF55021">
    <property type="entry name" value="ACT-like"/>
    <property type="match status" value="1"/>
</dbReference>
<dbReference type="SUPFAM" id="SSF53850">
    <property type="entry name" value="Periplasmic binding protein-like II"/>
    <property type="match status" value="1"/>
</dbReference>
<dbReference type="PROSITE" id="PS51671">
    <property type="entry name" value="ACT"/>
    <property type="match status" value="1"/>
</dbReference>
<dbReference type="PROSITE" id="PS00858">
    <property type="entry name" value="PREPHENATE_DEHYDR_2"/>
    <property type="match status" value="1"/>
</dbReference>
<dbReference type="PROSITE" id="PS51171">
    <property type="entry name" value="PREPHENATE_DEHYDR_3"/>
    <property type="match status" value="1"/>
</dbReference>
<keyword id="KW-0021">Allosteric enzyme</keyword>
<keyword id="KW-0028">Amino-acid biosynthesis</keyword>
<keyword id="KW-0057">Aromatic amino acid biosynthesis</keyword>
<keyword id="KW-0456">Lyase</keyword>
<keyword id="KW-0584">Phenylalanine biosynthesis</keyword>
<keyword id="KW-1185">Reference proteome</keyword>